<sequence length="575" mass="64093">MNTKGKVVGVNGNLVTIEVEGSVFMNEVLFVKTAGRNLKAEVIRIRGNEVDAQVFELTKGISVGDLVEFTDKLLTVELGPGLLTQVYDGLQNPLPELAIQCGFFLERGVYLRPLNKDKKWNFKKTSKVGDIVIAGDFLGFVIEGTVHHQIMIPFYKRDSYKIVEIVSDGDYSIDEQIAVIEDDSGMRHNITMSFHWPVKVPITNYKERLIPSEPMLTQTRIIDTFFPVAKGGTFCIPGPFGAGKTVLQQVTSRNADVDVVIIAACGERAGEVVETLKEFPELMDPKTGKSLMDRTCIICNTSSMPVAAREASVYTAITIGEYYRQMGLDILLLADSTSRWAQAMREMSGRLEEIPGEEAFPAYLESVIASFYERAGIVVLNNGDIGSVTVGGSVSPAGGNFEEPVTQATLKVVGAFHGLTRERSDARKFPAISPLESWSKYKGVIDQKKTEYARSFLVKGNEINQMMKVVGEEGISNDDFLIYLKSELLDSCYLQQNSFDSIDAAVSSERQNYMFDIVYNILKTNFEFSDKLQARDFINELRQNLLDMNLSSFKDHKFNKLEHALGELINFKKVI</sequence>
<proteinExistence type="inferred from homology"/>
<feature type="chain" id="PRO_1000119523" description="V-type ATP synthase alpha chain">
    <location>
        <begin position="1"/>
        <end position="575"/>
    </location>
</feature>
<feature type="binding site" evidence="1">
    <location>
        <begin position="238"/>
        <end position="245"/>
    </location>
    <ligand>
        <name>ATP</name>
        <dbReference type="ChEBI" id="CHEBI:30616"/>
    </ligand>
</feature>
<comment type="function">
    <text evidence="1">Produces ATP from ADP in the presence of a proton gradient across the membrane. The V-type alpha chain is a catalytic subunit.</text>
</comment>
<comment type="catalytic activity">
    <reaction evidence="1">
        <text>ATP + H2O + 4 H(+)(in) = ADP + phosphate + 5 H(+)(out)</text>
        <dbReference type="Rhea" id="RHEA:57720"/>
        <dbReference type="ChEBI" id="CHEBI:15377"/>
        <dbReference type="ChEBI" id="CHEBI:15378"/>
        <dbReference type="ChEBI" id="CHEBI:30616"/>
        <dbReference type="ChEBI" id="CHEBI:43474"/>
        <dbReference type="ChEBI" id="CHEBI:456216"/>
        <dbReference type="EC" id="7.1.2.2"/>
    </reaction>
</comment>
<comment type="similarity">
    <text evidence="1">Belongs to the ATPase alpha/beta chains family.</text>
</comment>
<gene>
    <name evidence="1" type="primary">atpA</name>
    <name type="ordered locus">BbuZS7_0094</name>
</gene>
<protein>
    <recommendedName>
        <fullName evidence="1">V-type ATP synthase alpha chain</fullName>
        <ecNumber evidence="1">7.1.2.2</ecNumber>
    </recommendedName>
    <alternativeName>
        <fullName evidence="1">V-ATPase subunit A</fullName>
    </alternativeName>
</protein>
<organism>
    <name type="scientific">Borreliella burgdorferi (strain ZS7)</name>
    <name type="common">Borrelia burgdorferi</name>
    <dbReference type="NCBI Taxonomy" id="445985"/>
    <lineage>
        <taxon>Bacteria</taxon>
        <taxon>Pseudomonadati</taxon>
        <taxon>Spirochaetota</taxon>
        <taxon>Spirochaetia</taxon>
        <taxon>Spirochaetales</taxon>
        <taxon>Borreliaceae</taxon>
        <taxon>Borreliella</taxon>
    </lineage>
</organism>
<reference key="1">
    <citation type="journal article" date="2011" name="J. Bacteriol.">
        <title>Whole-genome sequences of thirteen isolates of Borrelia burgdorferi.</title>
        <authorList>
            <person name="Schutzer S.E."/>
            <person name="Fraser-Liggett C.M."/>
            <person name="Casjens S.R."/>
            <person name="Qiu W.G."/>
            <person name="Dunn J.J."/>
            <person name="Mongodin E.F."/>
            <person name="Luft B.J."/>
        </authorList>
    </citation>
    <scope>NUCLEOTIDE SEQUENCE [LARGE SCALE GENOMIC DNA]</scope>
    <source>
        <strain>ZS7</strain>
    </source>
</reference>
<name>VATA_BORBZ</name>
<accession>B7J127</accession>
<evidence type="ECO:0000255" key="1">
    <source>
        <dbReference type="HAMAP-Rule" id="MF_00309"/>
    </source>
</evidence>
<dbReference type="EC" id="7.1.2.2" evidence="1"/>
<dbReference type="EMBL" id="CP001205">
    <property type="protein sequence ID" value="ACK74625.1"/>
    <property type="molecule type" value="Genomic_DNA"/>
</dbReference>
<dbReference type="RefSeq" id="WP_012597331.1">
    <property type="nucleotide sequence ID" value="NC_011728.1"/>
</dbReference>
<dbReference type="SMR" id="B7J127"/>
<dbReference type="KEGG" id="bbz:BbuZS7_0094"/>
<dbReference type="HOGENOM" id="CLU_008162_1_1_12"/>
<dbReference type="Proteomes" id="UP000006901">
    <property type="component" value="Chromosome"/>
</dbReference>
<dbReference type="GO" id="GO:0045259">
    <property type="term" value="C:proton-transporting ATP synthase complex"/>
    <property type="evidence" value="ECO:0007669"/>
    <property type="project" value="UniProtKB-ARBA"/>
</dbReference>
<dbReference type="GO" id="GO:0005524">
    <property type="term" value="F:ATP binding"/>
    <property type="evidence" value="ECO:0007669"/>
    <property type="project" value="UniProtKB-UniRule"/>
</dbReference>
<dbReference type="GO" id="GO:0046933">
    <property type="term" value="F:proton-transporting ATP synthase activity, rotational mechanism"/>
    <property type="evidence" value="ECO:0007669"/>
    <property type="project" value="UniProtKB-UniRule"/>
</dbReference>
<dbReference type="GO" id="GO:0046961">
    <property type="term" value="F:proton-transporting ATPase activity, rotational mechanism"/>
    <property type="evidence" value="ECO:0007669"/>
    <property type="project" value="InterPro"/>
</dbReference>
<dbReference type="GO" id="GO:0042777">
    <property type="term" value="P:proton motive force-driven plasma membrane ATP synthesis"/>
    <property type="evidence" value="ECO:0007669"/>
    <property type="project" value="UniProtKB-UniRule"/>
</dbReference>
<dbReference type="CDD" id="cd01426">
    <property type="entry name" value="ATP-synt_F1_V1_A1_AB_FliI_N"/>
    <property type="match status" value="1"/>
</dbReference>
<dbReference type="CDD" id="cd18111">
    <property type="entry name" value="ATP-synt_V_A-type_alpha_C"/>
    <property type="match status" value="1"/>
</dbReference>
<dbReference type="CDD" id="cd01134">
    <property type="entry name" value="V_A-ATPase_A"/>
    <property type="match status" value="1"/>
</dbReference>
<dbReference type="Gene3D" id="2.40.30.20">
    <property type="match status" value="1"/>
</dbReference>
<dbReference type="Gene3D" id="2.40.50.100">
    <property type="match status" value="1"/>
</dbReference>
<dbReference type="Gene3D" id="1.10.1140.10">
    <property type="entry name" value="Bovine Mitochondrial F1-atpase, Atp Synthase Beta Chain, Chain D, domain 3"/>
    <property type="match status" value="1"/>
</dbReference>
<dbReference type="Gene3D" id="3.40.50.300">
    <property type="entry name" value="P-loop containing nucleotide triphosphate hydrolases"/>
    <property type="match status" value="1"/>
</dbReference>
<dbReference type="HAMAP" id="MF_00309">
    <property type="entry name" value="ATP_synth_A_arch"/>
    <property type="match status" value="1"/>
</dbReference>
<dbReference type="InterPro" id="IPR055190">
    <property type="entry name" value="ATP-synt_VA_C"/>
</dbReference>
<dbReference type="InterPro" id="IPR031686">
    <property type="entry name" value="ATP-synth_a_Xtn"/>
</dbReference>
<dbReference type="InterPro" id="IPR023366">
    <property type="entry name" value="ATP_synth_asu-like_sf"/>
</dbReference>
<dbReference type="InterPro" id="IPR004100">
    <property type="entry name" value="ATPase_F1/V1/A1_a/bsu_N"/>
</dbReference>
<dbReference type="InterPro" id="IPR036121">
    <property type="entry name" value="ATPase_F1/V1/A1_a/bsu_N_sf"/>
</dbReference>
<dbReference type="InterPro" id="IPR000194">
    <property type="entry name" value="ATPase_F1/V1/A1_a/bsu_nucl-bd"/>
</dbReference>
<dbReference type="InterPro" id="IPR024034">
    <property type="entry name" value="ATPase_F1/V1_b/a_C"/>
</dbReference>
<dbReference type="InterPro" id="IPR027417">
    <property type="entry name" value="P-loop_NTPase"/>
</dbReference>
<dbReference type="InterPro" id="IPR022878">
    <property type="entry name" value="V-ATPase_asu"/>
</dbReference>
<dbReference type="NCBIfam" id="NF003220">
    <property type="entry name" value="PRK04192.1"/>
    <property type="match status" value="1"/>
</dbReference>
<dbReference type="PANTHER" id="PTHR43607:SF1">
    <property type="entry name" value="H(+)-TRANSPORTING TWO-SECTOR ATPASE"/>
    <property type="match status" value="1"/>
</dbReference>
<dbReference type="PANTHER" id="PTHR43607">
    <property type="entry name" value="V-TYPE PROTON ATPASE CATALYTIC SUBUNIT A"/>
    <property type="match status" value="1"/>
</dbReference>
<dbReference type="Pfam" id="PF00006">
    <property type="entry name" value="ATP-synt_ab"/>
    <property type="match status" value="1"/>
</dbReference>
<dbReference type="Pfam" id="PF02874">
    <property type="entry name" value="ATP-synt_ab_N"/>
    <property type="match status" value="1"/>
</dbReference>
<dbReference type="Pfam" id="PF16886">
    <property type="entry name" value="ATP-synt_ab_Xtn"/>
    <property type="match status" value="1"/>
</dbReference>
<dbReference type="Pfam" id="PF22919">
    <property type="entry name" value="ATP-synt_VA_C"/>
    <property type="match status" value="1"/>
</dbReference>
<dbReference type="SUPFAM" id="SSF50615">
    <property type="entry name" value="N-terminal domain of alpha and beta subunits of F1 ATP synthase"/>
    <property type="match status" value="1"/>
</dbReference>
<dbReference type="SUPFAM" id="SSF52540">
    <property type="entry name" value="P-loop containing nucleoside triphosphate hydrolases"/>
    <property type="match status" value="1"/>
</dbReference>
<keyword id="KW-0066">ATP synthesis</keyword>
<keyword id="KW-0067">ATP-binding</keyword>
<keyword id="KW-0375">Hydrogen ion transport</keyword>
<keyword id="KW-0406">Ion transport</keyword>
<keyword id="KW-0547">Nucleotide-binding</keyword>
<keyword id="KW-1278">Translocase</keyword>
<keyword id="KW-0813">Transport</keyword>